<name>SKAP_HUMAN</name>
<keyword id="KW-0025">Alternative splicing</keyword>
<keyword id="KW-0131">Cell cycle</keyword>
<keyword id="KW-0132">Cell division</keyword>
<keyword id="KW-0137">Centromere</keyword>
<keyword id="KW-0158">Chromosome</keyword>
<keyword id="KW-0175">Coiled coil</keyword>
<keyword id="KW-0963">Cytoplasm</keyword>
<keyword id="KW-0206">Cytoskeleton</keyword>
<keyword id="KW-0225">Disease variant</keyword>
<keyword id="KW-0995">Kinetochore</keyword>
<keyword id="KW-0493">Microtubule</keyword>
<keyword id="KW-0498">Mitosis</keyword>
<keyword id="KW-0539">Nucleus</keyword>
<keyword id="KW-0597">Phosphoprotein</keyword>
<keyword id="KW-1267">Proteomics identification</keyword>
<keyword id="KW-1185">Reference proteome</keyword>
<comment type="function">
    <text evidence="4 5 6 8 16">Essential component of the mitotic spindle required for faithful chromosome segregation and progression into anaphase (PubMed:19667759). Promotes the metaphase-to-anaphase transition and is required for chromosome alignment, normal timing of sister chromatid segregation, and maintenance of spindle pole architecture (PubMed:19667759, PubMed:22110139). The astrin (SPAG5)-kinastrin (SKAP) complex promotes stable microtubule-kinetochore attachments (PubMed:21402792). Required for kinetochore oscillations and dynamics of microtubule plus-ends during live cell mitosis, possibly by forming a link between spindle microtubule plus-ends and mitotic chromosomes to achieve faithful cell division (PubMed:23035123). May be involved in UV-induced apoptosis via its interaction with PRPF19; however, these results need additional evidences (PubMed:24718257).</text>
</comment>
<comment type="subunit">
    <text evidence="5 6 7 8 9 11">Part of an astrin (SPAG5)-kinastrin (SKAP) complex containing KNSTRN, SPAG5, PLK1, DYNLL1 and SGO2 (PubMed:21402792). Interacts with SPAG5 (PubMed:21402792). Directly binds to microtubules, although at relatively low affinity (PubMed:21402792). Interacts with CENPE; this interaction greatly favors microtubule-binding (PubMed:22110139). Interacts with DSN1/MIS13; leading to localization to kinetochores (PubMed:23035123). Interacts with MAPRE1/EB1; leading to localization to the microtubule plus ends (PubMed:23035123). Interacts with PRPF19 (PubMed:24718257). Interacts with DYNLL1 (PubMed:22965910). Interacts with MAP4 (PubMed:29180244).</text>
</comment>
<comment type="interaction">
    <interactant intactId="EBI-373334">
        <id>Q9Y448</id>
    </interactant>
    <interactant intactId="EBI-11096309">
        <id>Q9NYB9-2</id>
        <label>ABI2</label>
    </interactant>
    <organismsDiffer>false</organismsDiffer>
    <experiments>3</experiments>
</comment>
<comment type="interaction">
    <interactant intactId="EBI-373334">
        <id>Q9Y448</id>
    </interactant>
    <interactant intactId="EBI-745073">
        <id>Q9BXY8</id>
        <label>BEX2</label>
    </interactant>
    <organismsDiffer>false</organismsDiffer>
    <experiments>3</experiments>
</comment>
<comment type="interaction">
    <interactant intactId="EBI-373334">
        <id>Q9Y448</id>
    </interactant>
    <interactant intactId="EBI-466029">
        <id>P42858</id>
        <label>HTT</label>
    </interactant>
    <organismsDiffer>false</organismsDiffer>
    <experiments>3</experiments>
</comment>
<comment type="interaction">
    <interactant intactId="EBI-373334">
        <id>Q9Y448</id>
    </interactant>
    <interactant intactId="EBI-9091197">
        <id>Q8IY31-3</id>
        <label>IFT20</label>
    </interactant>
    <organismsDiffer>false</organismsDiffer>
    <experiments>3</experiments>
</comment>
<comment type="interaction">
    <interactant intactId="EBI-373334">
        <id>Q9Y448</id>
    </interactant>
    <interactant intactId="EBI-1004115">
        <id>Q15691</id>
        <label>MAPRE1</label>
    </interactant>
    <organismsDiffer>false</organismsDiffer>
    <experiments>5</experiments>
</comment>
<comment type="interaction">
    <interactant intactId="EBI-373334">
        <id>Q9Y448</id>
    </interactant>
    <interactant intactId="EBI-726739">
        <id>Q9UPY8</id>
        <label>MAPRE3</label>
    </interactant>
    <organismsDiffer>false</organismsDiffer>
    <experiments>3</experiments>
</comment>
<comment type="interaction">
    <interactant intactId="EBI-373334">
        <id>Q9Y448</id>
    </interactant>
    <interactant intactId="EBI-536879">
        <id>O43482</id>
        <label>OIP5</label>
    </interactant>
    <organismsDiffer>false</organismsDiffer>
    <experiments>3</experiments>
</comment>
<comment type="interaction">
    <interactant intactId="EBI-373334">
        <id>Q9Y448</id>
    </interactant>
    <interactant intactId="EBI-368321">
        <id>O60437</id>
        <label>PPL</label>
    </interactant>
    <organismsDiffer>false</organismsDiffer>
    <experiments>3</experiments>
</comment>
<comment type="interaction">
    <interactant intactId="EBI-373334">
        <id>Q9Y448</id>
    </interactant>
    <interactant intactId="EBI-743117">
        <id>Q96ES7</id>
        <label>SGF29</label>
    </interactant>
    <organismsDiffer>false</organismsDiffer>
    <experiments>8</experiments>
</comment>
<comment type="interaction">
    <interactant intactId="EBI-373334">
        <id>Q9Y448</id>
    </interactant>
    <interactant intactId="EBI-712969">
        <id>Q9Y3C0</id>
        <label>WASHC3</label>
    </interactant>
    <organismsDiffer>false</organismsDiffer>
    <experiments>6</experiments>
</comment>
<comment type="subcellular location">
    <subcellularLocation>
        <location evidence="9">Nucleus</location>
    </subcellularLocation>
    <subcellularLocation>
        <location evidence="4 5 6 8">Chromosome</location>
        <location evidence="4 5 6 8">Centromere</location>
        <location evidence="4 5 6 8">Kinetochore</location>
    </subcellularLocation>
    <subcellularLocation>
        <location evidence="4">Cytoplasm</location>
        <location evidence="4">Cytoskeleton</location>
        <location evidence="4">Spindle pole</location>
    </subcellularLocation>
    <subcellularLocation>
        <location evidence="11">Cytoplasm</location>
        <location evidence="11">Cytoskeleton</location>
        <location evidence="11">Microtubule organizing center</location>
    </subcellularLocation>
    <text evidence="4 5 6 8">Colocalizes with microtubules around centrosomes in prophase and with the mitotic spindle at prometaphase and metaphase. From late prometaphase to anaphase, is highly concentrated on kinetochores. Located at the kinetochore-microtubule interface. The astrin (SPAG5)-kinastrin (SKAP) complex localizes to the microtubule plus ends (PubMed:23035123).</text>
</comment>
<comment type="alternative products">
    <event type="alternative splicing"/>
    <isoform>
        <id>Q9Y448-1</id>
        <name>1</name>
        <sequence type="displayed"/>
    </isoform>
    <isoform>
        <id>Q9Y448-2</id>
        <name>2</name>
        <sequence type="described" ref="VSP_041070"/>
    </isoform>
    <isoform>
        <id>Q9Y448-3</id>
        <name>3</name>
        <sequence type="described" ref="VSP_041069"/>
    </isoform>
</comment>
<comment type="tissue specificity">
    <text evidence="10">Widely expressed, including in skin.</text>
</comment>
<comment type="induction">
    <text evidence="3 6">Degraded at the end of mitosis. Down-regulated upon exposure to nitric oxide.</text>
</comment>
<comment type="domain">
    <text evidence="8">The coiled coil regions mediate binding to kinetochores.</text>
</comment>
<comment type="disease" evidence="11">
    <disease id="DI-06090">
        <name>Roifman-Chitayat syndrome</name>
        <acronym>ROCHIS</acronym>
        <description>An autosomal recessive digenic disorder characterized by global developmental delay, variable neurologic features such as seizures and ataxia, optic atrophy, dysmorphic facial features, distal skeletal anomalies, and recurrent invasive infections due to combined immunodeficiency.</description>
        <dbReference type="MIM" id="613328"/>
    </disease>
    <text evidence="11">The disease is caused by variants affecting distinct genetic loci, including the gene represented in this entry. Caused by the simultaneous occurrence of homozygous mutations in PIK3CD and KNSTRN.</text>
</comment>
<comment type="disease">
    <text evidence="10">Cutaneous squamous cell carcinomas (SCC): A malignancy of the skin. The hallmark of cutaneous SCC is malignant transformation of normal epidermal keratinocytes. Disease susceptibility is associated with variants affecting the gene represented in this entry. Variant Phe-24 appears specific for UV-associated malignancies (PubMed:25194279).</text>
</comment>
<comment type="sequence caution" evidence="15">
    <conflict type="erroneous termination">
        <sequence resource="EMBL-CDS" id="AAH04543"/>
    </conflict>
    <text>Truncated C-terminus.</text>
</comment>
<comment type="sequence caution" evidence="15">
    <conflict type="erroneous termination">
        <sequence resource="EMBL-CDS" id="AAH14060"/>
    </conflict>
    <text>Truncated C-terminus.</text>
</comment>
<comment type="sequence caution" evidence="15">
    <conflict type="erroneous initiation">
        <sequence resource="EMBL-CDS" id="AAI07803"/>
    </conflict>
    <text>Extended N-terminus.</text>
</comment>
<gene>
    <name evidence="17" type="primary">KNSTRN</name>
    <name evidence="17" type="synonym">C15orf23</name>
    <name evidence="12" type="synonym">SKAP</name>
    <name type="synonym">TRAF4AF1</name>
    <name type="ORF">HSD11</name>
</gene>
<organism>
    <name type="scientific">Homo sapiens</name>
    <name type="common">Human</name>
    <dbReference type="NCBI Taxonomy" id="9606"/>
    <lineage>
        <taxon>Eukaryota</taxon>
        <taxon>Metazoa</taxon>
        <taxon>Chordata</taxon>
        <taxon>Craniata</taxon>
        <taxon>Vertebrata</taxon>
        <taxon>Euteleostomi</taxon>
        <taxon>Mammalia</taxon>
        <taxon>Eutheria</taxon>
        <taxon>Euarchontoglires</taxon>
        <taxon>Primates</taxon>
        <taxon>Haplorrhini</taxon>
        <taxon>Catarrhini</taxon>
        <taxon>Hominidae</taxon>
        <taxon>Homo</taxon>
    </lineage>
</organism>
<protein>
    <recommendedName>
        <fullName evidence="12">Small kinetochore-associated protein</fullName>
        <shortName evidence="12">SKAP</shortName>
    </recommendedName>
    <alternativeName>
        <fullName evidence="13">Kinetochore-localized astrin-binding protein</fullName>
        <shortName evidence="13">Kinastrin</shortName>
    </alternativeName>
    <alternativeName>
        <fullName>Kinetochore-localized astrin/SPAG5-binding protein</fullName>
    </alternativeName>
    <alternativeName>
        <fullName>TRAF4-associated factor 1</fullName>
    </alternativeName>
</protein>
<feature type="chain" id="PRO_0000274512" description="Small kinetochore-associated protein">
    <location>
        <begin position="1"/>
        <end position="316"/>
    </location>
</feature>
<feature type="region of interest" description="Interaction with SPAG5" evidence="5">
    <location>
        <begin position="159"/>
        <end position="316"/>
    </location>
</feature>
<feature type="coiled-coil region" evidence="1">
    <location>
        <begin position="166"/>
        <end position="216"/>
    </location>
</feature>
<feature type="coiled-coil region" evidence="1">
    <location>
        <begin position="248"/>
        <end position="316"/>
    </location>
</feature>
<feature type="modified residue" description="Phosphoserine" evidence="18">
    <location>
        <position position="128"/>
    </location>
</feature>
<feature type="splice variant" id="VSP_041069" description="In isoform 3." evidence="14">
    <original>ALGSETLASRQESTTDHMDSMLLLETLQEELKLFNETAKKQMEELQALKVKLEMKEERVRFLEQQTLCNNQVNDLTTALKEMEQLLEM</original>
    <variation>VAVRNFARGAEAF</variation>
    <location>
        <begin position="229"/>
        <end position="316"/>
    </location>
</feature>
<feature type="splice variant" id="VSP_041070" description="In isoform 2." evidence="14">
    <original>ALKVKLEMKEERVRFLEQQTLCNNQVNDLTTALKEMEQLLEM</original>
    <variation>IAWMNHGILHQM</variation>
    <location>
        <begin position="275"/>
        <end position="316"/>
    </location>
</feature>
<feature type="sequence variant" id="VAR_071857" description="In SCC; impaired chromatid cohesion; dbSNP:rs868438023." evidence="10">
    <original>S</original>
    <variation>F</variation>
    <location>
        <position position="24"/>
    </location>
</feature>
<feature type="sequence variant" id="VAR_030304" description="In dbSNP:rs7164132." evidence="2">
    <original>A</original>
    <variation>E</variation>
    <location>
        <position position="40"/>
    </location>
</feature>
<feature type="sequence variant" id="VAR_030305" description="In dbSNP:rs7169404." evidence="2">
    <original>R</original>
    <variation>L</variation>
    <location>
        <position position="75"/>
    </location>
</feature>
<feature type="sequence variant" id="VAR_030306" description="In dbSNP:rs7169262." evidence="2">
    <original>P</original>
    <variation>S</variation>
    <location>
        <position position="92"/>
    </location>
</feature>
<feature type="sequence conflict" description="In Ref. 4; AAH45739." evidence="15" ref="4">
    <original>T</original>
    <variation>K</variation>
    <location>
        <position position="47"/>
    </location>
</feature>
<feature type="sequence conflict" description="In Ref. 4; AAI18640." evidence="15" ref="4">
    <original>S</original>
    <variation>G</variation>
    <location>
        <position position="232"/>
    </location>
</feature>
<feature type="sequence conflict" description="In Ref. 6; AAD24201." evidence="15" ref="6">
    <original>A</original>
    <variation>S</variation>
    <location>
        <position position="236"/>
    </location>
</feature>
<dbReference type="EMBL" id="AY652615">
    <property type="protein sequence ID" value="AAT66172.1"/>
    <property type="molecule type" value="mRNA"/>
</dbReference>
<dbReference type="EMBL" id="AK301887">
    <property type="protein sequence ID" value="BAG63319.1"/>
    <property type="molecule type" value="mRNA"/>
</dbReference>
<dbReference type="EMBL" id="AC013356">
    <property type="status" value="NOT_ANNOTATED_CDS"/>
    <property type="molecule type" value="Genomic_DNA"/>
</dbReference>
<dbReference type="EMBL" id="BC004543">
    <property type="protein sequence ID" value="AAH04543.1"/>
    <property type="status" value="ALT_TERM"/>
    <property type="molecule type" value="mRNA"/>
</dbReference>
<dbReference type="EMBL" id="BC014060">
    <property type="protein sequence ID" value="AAH14060.1"/>
    <property type="status" value="ALT_TERM"/>
    <property type="molecule type" value="mRNA"/>
</dbReference>
<dbReference type="EMBL" id="BC045739">
    <property type="protein sequence ID" value="AAH45739.1"/>
    <property type="molecule type" value="mRNA"/>
</dbReference>
<dbReference type="EMBL" id="BC064344">
    <property type="protein sequence ID" value="AAH64344.1"/>
    <property type="molecule type" value="mRNA"/>
</dbReference>
<dbReference type="EMBL" id="BC107802">
    <property type="protein sequence ID" value="AAI07803.1"/>
    <property type="status" value="ALT_INIT"/>
    <property type="molecule type" value="mRNA"/>
</dbReference>
<dbReference type="EMBL" id="BC118559">
    <property type="protein sequence ID" value="AAI18560.1"/>
    <property type="molecule type" value="mRNA"/>
</dbReference>
<dbReference type="EMBL" id="BC118639">
    <property type="protein sequence ID" value="AAI18640.1"/>
    <property type="molecule type" value="mRNA"/>
</dbReference>
<dbReference type="EMBL" id="CR602848">
    <property type="status" value="NOT_ANNOTATED_CDS"/>
    <property type="molecule type" value="mRNA"/>
</dbReference>
<dbReference type="EMBL" id="CR611451">
    <property type="status" value="NOT_ANNOTATED_CDS"/>
    <property type="molecule type" value="mRNA"/>
</dbReference>
<dbReference type="EMBL" id="U81002">
    <property type="protein sequence ID" value="AAD24201.1"/>
    <property type="molecule type" value="mRNA"/>
</dbReference>
<dbReference type="CCDS" id="CCDS42021.1">
    <molecule id="Q9Y448-1"/>
</dbReference>
<dbReference type="CCDS" id="CCDS45226.1">
    <molecule id="Q9Y448-2"/>
</dbReference>
<dbReference type="CCDS" id="CCDS45227.1">
    <molecule id="Q9Y448-3"/>
</dbReference>
<dbReference type="RefSeq" id="NP_001136233.1">
    <molecule id="Q9Y448-2"/>
    <property type="nucleotide sequence ID" value="NM_001142761.1"/>
</dbReference>
<dbReference type="RefSeq" id="NP_001136234.1">
    <molecule id="Q9Y448-3"/>
    <property type="nucleotide sequence ID" value="NM_001142762.1"/>
</dbReference>
<dbReference type="RefSeq" id="NP_150628.3">
    <molecule id="Q9Y448-1"/>
    <property type="nucleotide sequence ID" value="NM_033286.4"/>
</dbReference>
<dbReference type="SMR" id="Q9Y448"/>
<dbReference type="BioGRID" id="124714">
    <property type="interactions" value="103"/>
</dbReference>
<dbReference type="CORUM" id="Q9Y448"/>
<dbReference type="DIP" id="DIP-31247N"/>
<dbReference type="FunCoup" id="Q9Y448">
    <property type="interactions" value="743"/>
</dbReference>
<dbReference type="IntAct" id="Q9Y448">
    <property type="interactions" value="72"/>
</dbReference>
<dbReference type="MINT" id="Q9Y448"/>
<dbReference type="STRING" id="9606.ENSP00000249776"/>
<dbReference type="GlyConnect" id="2078">
    <property type="glycosylation" value="1 N-Linked glycan (1 site)"/>
</dbReference>
<dbReference type="GlyCosmos" id="Q9Y448">
    <property type="glycosylation" value="1 site, 2 glycans"/>
</dbReference>
<dbReference type="GlyGen" id="Q9Y448">
    <property type="glycosylation" value="1 site, 2 N-linked glycans (1 site)"/>
</dbReference>
<dbReference type="iPTMnet" id="Q9Y448"/>
<dbReference type="MetOSite" id="Q9Y448"/>
<dbReference type="PhosphoSitePlus" id="Q9Y448"/>
<dbReference type="BioMuta" id="KNSTRN"/>
<dbReference type="DMDM" id="125991199"/>
<dbReference type="jPOST" id="Q9Y448"/>
<dbReference type="MassIVE" id="Q9Y448"/>
<dbReference type="PaxDb" id="9606-ENSP00000249776"/>
<dbReference type="PeptideAtlas" id="Q9Y448"/>
<dbReference type="ProteomicsDB" id="86099">
    <molecule id="Q9Y448-1"/>
</dbReference>
<dbReference type="ProteomicsDB" id="86100">
    <molecule id="Q9Y448-2"/>
</dbReference>
<dbReference type="ProteomicsDB" id="86101">
    <molecule id="Q9Y448-3"/>
</dbReference>
<dbReference type="Pumba" id="Q9Y448"/>
<dbReference type="Antibodypedia" id="52276">
    <property type="antibodies" value="44 antibodies from 15 providers"/>
</dbReference>
<dbReference type="DNASU" id="90417"/>
<dbReference type="Ensembl" id="ENST00000249776.13">
    <molecule id="Q9Y448-1"/>
    <property type="protein sequence ID" value="ENSP00000249776.8"/>
    <property type="gene ID" value="ENSG00000128944.14"/>
</dbReference>
<dbReference type="Ensembl" id="ENST00000416151.6">
    <molecule id="Q9Y448-2"/>
    <property type="protein sequence ID" value="ENSP00000391233.2"/>
    <property type="gene ID" value="ENSG00000128944.14"/>
</dbReference>
<dbReference type="Ensembl" id="ENST00000448395.6">
    <molecule id="Q9Y448-3"/>
    <property type="protein sequence ID" value="ENSP00000393001.2"/>
    <property type="gene ID" value="ENSG00000128944.14"/>
</dbReference>
<dbReference type="GeneID" id="90417"/>
<dbReference type="KEGG" id="hsa:90417"/>
<dbReference type="MANE-Select" id="ENST00000249776.13">
    <property type="protein sequence ID" value="ENSP00000249776.8"/>
    <property type="RefSeq nucleotide sequence ID" value="NM_033286.4"/>
    <property type="RefSeq protein sequence ID" value="NP_150628.3"/>
</dbReference>
<dbReference type="UCSC" id="uc001zll.4">
    <molecule id="Q9Y448-1"/>
    <property type="organism name" value="human"/>
</dbReference>
<dbReference type="AGR" id="HGNC:30767"/>
<dbReference type="CTD" id="90417"/>
<dbReference type="DisGeNET" id="90417"/>
<dbReference type="GeneCards" id="KNSTRN"/>
<dbReference type="HGNC" id="HGNC:30767">
    <property type="gene designation" value="KNSTRN"/>
</dbReference>
<dbReference type="HPA" id="ENSG00000128944">
    <property type="expression patterns" value="Tissue enhanced (testis, thyroid gland)"/>
</dbReference>
<dbReference type="MalaCards" id="KNSTRN"/>
<dbReference type="MIM" id="613328">
    <property type="type" value="phenotype"/>
</dbReference>
<dbReference type="MIM" id="614718">
    <property type="type" value="gene"/>
</dbReference>
<dbReference type="neXtProt" id="NX_Q9Y448"/>
<dbReference type="OpenTargets" id="ENSG00000128944"/>
<dbReference type="Orphanet" id="221139">
    <property type="disease" value="Combined immunodeficiency with facio-oculo-skeletal anomalies"/>
</dbReference>
<dbReference type="PharmGKB" id="PA134895025"/>
<dbReference type="VEuPathDB" id="HostDB:ENSG00000128944"/>
<dbReference type="eggNOG" id="ENOG502S60X">
    <property type="taxonomic scope" value="Eukaryota"/>
</dbReference>
<dbReference type="GeneTree" id="ENSGT00390000010376"/>
<dbReference type="InParanoid" id="Q9Y448"/>
<dbReference type="OMA" id="QESTADH"/>
<dbReference type="OrthoDB" id="9940269at2759"/>
<dbReference type="PAN-GO" id="Q9Y448">
    <property type="GO annotations" value="7 GO annotations based on evolutionary models"/>
</dbReference>
<dbReference type="PhylomeDB" id="Q9Y448"/>
<dbReference type="TreeFam" id="TF336302"/>
<dbReference type="PathwayCommons" id="Q9Y448"/>
<dbReference type="SignaLink" id="Q9Y448"/>
<dbReference type="SIGNOR" id="Q9Y448"/>
<dbReference type="BioGRID-ORCS" id="90417">
    <property type="hits" value="20 hits in 1155 CRISPR screens"/>
</dbReference>
<dbReference type="GenomeRNAi" id="90417"/>
<dbReference type="Pharos" id="Q9Y448">
    <property type="development level" value="Tbio"/>
</dbReference>
<dbReference type="PRO" id="PR:Q9Y448"/>
<dbReference type="Proteomes" id="UP000005640">
    <property type="component" value="Chromosome 15"/>
</dbReference>
<dbReference type="RNAct" id="Q9Y448">
    <property type="molecule type" value="protein"/>
</dbReference>
<dbReference type="Bgee" id="ENSG00000128944">
    <property type="expression patterns" value="Expressed in ventricular zone and 160 other cell types or tissues"/>
</dbReference>
<dbReference type="ExpressionAtlas" id="Q9Y448">
    <property type="expression patterns" value="baseline and differential"/>
</dbReference>
<dbReference type="GO" id="GO:0034451">
    <property type="term" value="C:centriolar satellite"/>
    <property type="evidence" value="ECO:0000314"/>
    <property type="project" value="HPA"/>
</dbReference>
<dbReference type="GO" id="GO:0005737">
    <property type="term" value="C:cytoplasm"/>
    <property type="evidence" value="ECO:0007669"/>
    <property type="project" value="UniProtKB-KW"/>
</dbReference>
<dbReference type="GO" id="GO:0000776">
    <property type="term" value="C:kinetochore"/>
    <property type="evidence" value="ECO:0000314"/>
    <property type="project" value="UniProtKB"/>
</dbReference>
<dbReference type="GO" id="GO:0005815">
    <property type="term" value="C:microtubule organizing center"/>
    <property type="evidence" value="ECO:0000314"/>
    <property type="project" value="UniProtKB"/>
</dbReference>
<dbReference type="GO" id="GO:0035371">
    <property type="term" value="C:microtubule plus-end"/>
    <property type="evidence" value="ECO:0000314"/>
    <property type="project" value="UniProtKB"/>
</dbReference>
<dbReference type="GO" id="GO:0072686">
    <property type="term" value="C:mitotic spindle"/>
    <property type="evidence" value="ECO:0000314"/>
    <property type="project" value="HPA"/>
</dbReference>
<dbReference type="GO" id="GO:0005634">
    <property type="term" value="C:nucleus"/>
    <property type="evidence" value="ECO:0007669"/>
    <property type="project" value="UniProtKB-SubCell"/>
</dbReference>
<dbReference type="GO" id="GO:0005886">
    <property type="term" value="C:plasma membrane"/>
    <property type="evidence" value="ECO:0000314"/>
    <property type="project" value="HPA"/>
</dbReference>
<dbReference type="GO" id="GO:0001726">
    <property type="term" value="C:ruffle"/>
    <property type="evidence" value="ECO:0000314"/>
    <property type="project" value="ARUK-UCL"/>
</dbReference>
<dbReference type="GO" id="GO:0000922">
    <property type="term" value="C:spindle pole"/>
    <property type="evidence" value="ECO:0007669"/>
    <property type="project" value="UniProtKB-SubCell"/>
</dbReference>
<dbReference type="GO" id="GO:0051010">
    <property type="term" value="F:microtubule plus-end binding"/>
    <property type="evidence" value="ECO:0000314"/>
    <property type="project" value="ARUK-UCL"/>
</dbReference>
<dbReference type="GO" id="GO:0042803">
    <property type="term" value="F:protein homodimerization activity"/>
    <property type="evidence" value="ECO:0000353"/>
    <property type="project" value="ARUK-UCL"/>
</dbReference>
<dbReference type="GO" id="GO:0051301">
    <property type="term" value="P:cell division"/>
    <property type="evidence" value="ECO:0007669"/>
    <property type="project" value="UniProtKB-KW"/>
</dbReference>
<dbReference type="GO" id="GO:0016477">
    <property type="term" value="P:cell migration"/>
    <property type="evidence" value="ECO:0000315"/>
    <property type="project" value="ARUK-UCL"/>
</dbReference>
<dbReference type="GO" id="GO:0071364">
    <property type="term" value="P:cellular response to epidermal growth factor stimulus"/>
    <property type="evidence" value="ECO:0000315"/>
    <property type="project" value="ARUK-UCL"/>
</dbReference>
<dbReference type="GO" id="GO:0007059">
    <property type="term" value="P:chromosome segregation"/>
    <property type="evidence" value="ECO:0000315"/>
    <property type="project" value="UniProtKB"/>
</dbReference>
<dbReference type="GO" id="GO:0000226">
    <property type="term" value="P:microtubule cytoskeleton organization"/>
    <property type="evidence" value="ECO:0000315"/>
    <property type="project" value="ARUK-UCL"/>
</dbReference>
<dbReference type="GO" id="GO:0000070">
    <property type="term" value="P:mitotic sister chromatid segregation"/>
    <property type="evidence" value="ECO:0000315"/>
    <property type="project" value="UniProtKB"/>
</dbReference>
<dbReference type="GO" id="GO:0051988">
    <property type="term" value="P:regulation of attachment of spindle microtubules to kinetochore"/>
    <property type="evidence" value="ECO:0000315"/>
    <property type="project" value="UniProtKB"/>
</dbReference>
<dbReference type="GO" id="GO:0007051">
    <property type="term" value="P:spindle organization"/>
    <property type="evidence" value="ECO:0000315"/>
    <property type="project" value="UniProtKB"/>
</dbReference>
<dbReference type="InterPro" id="IPR033373">
    <property type="entry name" value="SKAP"/>
</dbReference>
<dbReference type="PANTHER" id="PTHR31940">
    <property type="entry name" value="SMALL KINETOCHORE-ASSOCIATED PROTEIN"/>
    <property type="match status" value="1"/>
</dbReference>
<dbReference type="PANTHER" id="PTHR31940:SF2">
    <property type="entry name" value="SMALL KINETOCHORE-ASSOCIATED PROTEIN"/>
    <property type="match status" value="1"/>
</dbReference>
<evidence type="ECO:0000255" key="1"/>
<evidence type="ECO:0000269" key="2">
    <source>
    </source>
</evidence>
<evidence type="ECO:0000269" key="3">
    <source>
    </source>
</evidence>
<evidence type="ECO:0000269" key="4">
    <source>
    </source>
</evidence>
<evidence type="ECO:0000269" key="5">
    <source>
    </source>
</evidence>
<evidence type="ECO:0000269" key="6">
    <source>
    </source>
</evidence>
<evidence type="ECO:0000269" key="7">
    <source>
    </source>
</evidence>
<evidence type="ECO:0000269" key="8">
    <source>
    </source>
</evidence>
<evidence type="ECO:0000269" key="9">
    <source>
    </source>
</evidence>
<evidence type="ECO:0000269" key="10">
    <source>
    </source>
</evidence>
<evidence type="ECO:0000269" key="11">
    <source>
    </source>
</evidence>
<evidence type="ECO:0000303" key="12">
    <source>
    </source>
</evidence>
<evidence type="ECO:0000303" key="13">
    <source>
    </source>
</evidence>
<evidence type="ECO:0000303" key="14">
    <source ref="5"/>
</evidence>
<evidence type="ECO:0000305" key="15"/>
<evidence type="ECO:0000305" key="16">
    <source>
    </source>
</evidence>
<evidence type="ECO:0000312" key="17">
    <source>
        <dbReference type="HGNC" id="HGNC:30767"/>
    </source>
</evidence>
<evidence type="ECO:0007744" key="18">
    <source>
    </source>
</evidence>
<accession>Q9Y448</accession>
<accession>B4DXA7</accession>
<accession>Q147U5</accession>
<accession>Q32Q57</accession>
<accession>Q5ISJ0</accession>
<accession>Q6P2S5</accession>
<accession>Q6PJM0</accession>
<accession>Q86XB4</accession>
<reference key="1">
    <citation type="submission" date="2004-06" db="EMBL/GenBank/DDBJ databases">
        <title>A spermatogenesis related gene expressed in nucleus.</title>
        <authorList>
            <person name="Cai C.L."/>
            <person name="Liu N."/>
            <person name="Lin W."/>
            <person name="Miao S.Y."/>
            <person name="Wang L.F."/>
        </authorList>
    </citation>
    <scope>NUCLEOTIDE SEQUENCE [LARGE SCALE MRNA] (ISOFORM 1)</scope>
    <source>
        <tissue>Testis</tissue>
    </source>
</reference>
<reference key="2">
    <citation type="journal article" date="2004" name="Nat. Genet.">
        <title>Complete sequencing and characterization of 21,243 full-length human cDNAs.</title>
        <authorList>
            <person name="Ota T."/>
            <person name="Suzuki Y."/>
            <person name="Nishikawa T."/>
            <person name="Otsuki T."/>
            <person name="Sugiyama T."/>
            <person name="Irie R."/>
            <person name="Wakamatsu A."/>
            <person name="Hayashi K."/>
            <person name="Sato H."/>
            <person name="Nagai K."/>
            <person name="Kimura K."/>
            <person name="Makita H."/>
            <person name="Sekine M."/>
            <person name="Obayashi M."/>
            <person name="Nishi T."/>
            <person name="Shibahara T."/>
            <person name="Tanaka T."/>
            <person name="Ishii S."/>
            <person name="Yamamoto J."/>
            <person name="Saito K."/>
            <person name="Kawai Y."/>
            <person name="Isono Y."/>
            <person name="Nakamura Y."/>
            <person name="Nagahari K."/>
            <person name="Murakami K."/>
            <person name="Yasuda T."/>
            <person name="Iwayanagi T."/>
            <person name="Wagatsuma M."/>
            <person name="Shiratori A."/>
            <person name="Sudo H."/>
            <person name="Hosoiri T."/>
            <person name="Kaku Y."/>
            <person name="Kodaira H."/>
            <person name="Kondo H."/>
            <person name="Sugawara M."/>
            <person name="Takahashi M."/>
            <person name="Kanda K."/>
            <person name="Yokoi T."/>
            <person name="Furuya T."/>
            <person name="Kikkawa E."/>
            <person name="Omura Y."/>
            <person name="Abe K."/>
            <person name="Kamihara K."/>
            <person name="Katsuta N."/>
            <person name="Sato K."/>
            <person name="Tanikawa M."/>
            <person name="Yamazaki M."/>
            <person name="Ninomiya K."/>
            <person name="Ishibashi T."/>
            <person name="Yamashita H."/>
            <person name="Murakawa K."/>
            <person name="Fujimori K."/>
            <person name="Tanai H."/>
            <person name="Kimata M."/>
            <person name="Watanabe M."/>
            <person name="Hiraoka S."/>
            <person name="Chiba Y."/>
            <person name="Ishida S."/>
            <person name="Ono Y."/>
            <person name="Takiguchi S."/>
            <person name="Watanabe S."/>
            <person name="Yosida M."/>
            <person name="Hotuta T."/>
            <person name="Kusano J."/>
            <person name="Kanehori K."/>
            <person name="Takahashi-Fujii A."/>
            <person name="Hara H."/>
            <person name="Tanase T.-O."/>
            <person name="Nomura Y."/>
            <person name="Togiya S."/>
            <person name="Komai F."/>
            <person name="Hara R."/>
            <person name="Takeuchi K."/>
            <person name="Arita M."/>
            <person name="Imose N."/>
            <person name="Musashino K."/>
            <person name="Yuuki H."/>
            <person name="Oshima A."/>
            <person name="Sasaki N."/>
            <person name="Aotsuka S."/>
            <person name="Yoshikawa Y."/>
            <person name="Matsunawa H."/>
            <person name="Ichihara T."/>
            <person name="Shiohata N."/>
            <person name="Sano S."/>
            <person name="Moriya S."/>
            <person name="Momiyama H."/>
            <person name="Satoh N."/>
            <person name="Takami S."/>
            <person name="Terashima Y."/>
            <person name="Suzuki O."/>
            <person name="Nakagawa S."/>
            <person name="Senoh A."/>
            <person name="Mizoguchi H."/>
            <person name="Goto Y."/>
            <person name="Shimizu F."/>
            <person name="Wakebe H."/>
            <person name="Hishigaki H."/>
            <person name="Watanabe T."/>
            <person name="Sugiyama A."/>
            <person name="Takemoto M."/>
            <person name="Kawakami B."/>
            <person name="Yamazaki M."/>
            <person name="Watanabe K."/>
            <person name="Kumagai A."/>
            <person name="Itakura S."/>
            <person name="Fukuzumi Y."/>
            <person name="Fujimori Y."/>
            <person name="Komiyama M."/>
            <person name="Tashiro H."/>
            <person name="Tanigami A."/>
            <person name="Fujiwara T."/>
            <person name="Ono T."/>
            <person name="Yamada K."/>
            <person name="Fujii Y."/>
            <person name="Ozaki K."/>
            <person name="Hirao M."/>
            <person name="Ohmori Y."/>
            <person name="Kawabata A."/>
            <person name="Hikiji T."/>
            <person name="Kobatake N."/>
            <person name="Inagaki H."/>
            <person name="Ikema Y."/>
            <person name="Okamoto S."/>
            <person name="Okitani R."/>
            <person name="Kawakami T."/>
            <person name="Noguchi S."/>
            <person name="Itoh T."/>
            <person name="Shigeta K."/>
            <person name="Senba T."/>
            <person name="Matsumura K."/>
            <person name="Nakajima Y."/>
            <person name="Mizuno T."/>
            <person name="Morinaga M."/>
            <person name="Sasaki M."/>
            <person name="Togashi T."/>
            <person name="Oyama M."/>
            <person name="Hata H."/>
            <person name="Watanabe M."/>
            <person name="Komatsu T."/>
            <person name="Mizushima-Sugano J."/>
            <person name="Satoh T."/>
            <person name="Shirai Y."/>
            <person name="Takahashi Y."/>
            <person name="Nakagawa K."/>
            <person name="Okumura K."/>
            <person name="Nagase T."/>
            <person name="Nomura N."/>
            <person name="Kikuchi H."/>
            <person name="Masuho Y."/>
            <person name="Yamashita R."/>
            <person name="Nakai K."/>
            <person name="Yada T."/>
            <person name="Nakamura Y."/>
            <person name="Ohara O."/>
            <person name="Isogai T."/>
            <person name="Sugano S."/>
        </authorList>
    </citation>
    <scope>NUCLEOTIDE SEQUENCE [LARGE SCALE MRNA] (ISOFORM 1)</scope>
    <source>
        <tissue>Testis</tissue>
    </source>
</reference>
<reference key="3">
    <citation type="journal article" date="2006" name="Nature">
        <title>Analysis of the DNA sequence and duplication history of human chromosome 15.</title>
        <authorList>
            <person name="Zody M.C."/>
            <person name="Garber M."/>
            <person name="Sharpe T."/>
            <person name="Young S.K."/>
            <person name="Rowen L."/>
            <person name="O'Neill K."/>
            <person name="Whittaker C.A."/>
            <person name="Kamal M."/>
            <person name="Chang J.L."/>
            <person name="Cuomo C.A."/>
            <person name="Dewar K."/>
            <person name="FitzGerald M.G."/>
            <person name="Kodira C.D."/>
            <person name="Madan A."/>
            <person name="Qin S."/>
            <person name="Yang X."/>
            <person name="Abbasi N."/>
            <person name="Abouelleil A."/>
            <person name="Arachchi H.M."/>
            <person name="Baradarani L."/>
            <person name="Birditt B."/>
            <person name="Bloom S."/>
            <person name="Bloom T."/>
            <person name="Borowsky M.L."/>
            <person name="Burke J."/>
            <person name="Butler J."/>
            <person name="Cook A."/>
            <person name="DeArellano K."/>
            <person name="DeCaprio D."/>
            <person name="Dorris L. III"/>
            <person name="Dors M."/>
            <person name="Eichler E.E."/>
            <person name="Engels R."/>
            <person name="Fahey J."/>
            <person name="Fleetwood P."/>
            <person name="Friedman C."/>
            <person name="Gearin G."/>
            <person name="Hall J.L."/>
            <person name="Hensley G."/>
            <person name="Johnson E."/>
            <person name="Jones C."/>
            <person name="Kamat A."/>
            <person name="Kaur A."/>
            <person name="Locke D.P."/>
            <person name="Madan A."/>
            <person name="Munson G."/>
            <person name="Jaffe D.B."/>
            <person name="Lui A."/>
            <person name="Macdonald P."/>
            <person name="Mauceli E."/>
            <person name="Naylor J.W."/>
            <person name="Nesbitt R."/>
            <person name="Nicol R."/>
            <person name="O'Leary S.B."/>
            <person name="Ratcliffe A."/>
            <person name="Rounsley S."/>
            <person name="She X."/>
            <person name="Sneddon K.M.B."/>
            <person name="Stewart S."/>
            <person name="Sougnez C."/>
            <person name="Stone S.M."/>
            <person name="Topham K."/>
            <person name="Vincent D."/>
            <person name="Wang S."/>
            <person name="Zimmer A.R."/>
            <person name="Birren B.W."/>
            <person name="Hood L."/>
            <person name="Lander E.S."/>
            <person name="Nusbaum C."/>
        </authorList>
    </citation>
    <scope>NUCLEOTIDE SEQUENCE [LARGE SCALE GENOMIC DNA]</scope>
</reference>
<reference key="4">
    <citation type="journal article" date="2004" name="Genome Res.">
        <title>The status, quality, and expansion of the NIH full-length cDNA project: the Mammalian Gene Collection (MGC).</title>
        <authorList>
            <consortium name="The MGC Project Team"/>
        </authorList>
    </citation>
    <scope>NUCLEOTIDE SEQUENCE [LARGE SCALE MRNA] (ISOFORM 1)</scope>
    <scope>VARIANTS GLU-40; LEU-75 AND SER-92</scope>
    <source>
        <tissue>Kidney</tissue>
        <tissue>Ovary</tissue>
        <tissue>Testis</tissue>
    </source>
</reference>
<reference key="5">
    <citation type="submission" date="2004-07" db="EMBL/GenBank/DDBJ databases">
        <title>Full-length cDNA libraries and normalization.</title>
        <authorList>
            <person name="Li W.B."/>
            <person name="Gruber C."/>
            <person name="Jessee J."/>
            <person name="Polayes D."/>
        </authorList>
    </citation>
    <scope>NUCLEOTIDE SEQUENCE [LARGE SCALE MRNA] OF 39-316 (ISOFORM 3)</scope>
    <scope>NUCLEOTIDE SEQUENCE [LARGE SCALE MRNA] OF 55-316 (ISOFORM 2)</scope>
    <source>
        <tissue>Neuroblastoma</tissue>
    </source>
</reference>
<reference key="6">
    <citation type="submission" date="1996-12" db="EMBL/GenBank/DDBJ databases">
        <authorList>
            <person name="Touji S."/>
            <person name="Yano M."/>
            <person name="Kobayasi A."/>
            <person name="Tamai K."/>
        </authorList>
    </citation>
    <scope>NUCLEOTIDE SEQUENCE [MRNA] OF 44-316 (ISOFORM 1)</scope>
</reference>
<reference key="7">
    <citation type="journal article" date="2005" name="Free Radic. Biol. Med.">
        <title>Analysis of differentially expressed genes in nitric oxide-exposed human monocytic cells.</title>
        <authorList>
            <person name="Turpaev K."/>
            <person name="Bouton C."/>
            <person name="Diet A."/>
            <person name="Glatigny A."/>
            <person name="Drapier J.-C."/>
        </authorList>
    </citation>
    <scope>INDUCTION BY NITRIC OXIDE</scope>
</reference>
<reference key="8">
    <citation type="journal article" date="2008" name="Mol. Cell">
        <title>Kinase-selective enrichment enables quantitative phosphoproteomics of the kinome across the cell cycle.</title>
        <authorList>
            <person name="Daub H."/>
            <person name="Olsen J.V."/>
            <person name="Bairlein M."/>
            <person name="Gnad F."/>
            <person name="Oppermann F.S."/>
            <person name="Korner R."/>
            <person name="Greff Z."/>
            <person name="Keri G."/>
            <person name="Stemmann O."/>
            <person name="Mann M."/>
        </authorList>
    </citation>
    <scope>PHOSPHORYLATION [LARGE SCALE ANALYSIS] AT SER-128</scope>
    <scope>IDENTIFICATION BY MASS SPECTROMETRY [LARGE SCALE ANALYSIS]</scope>
    <source>
        <tissue>Cervix carcinoma</tissue>
    </source>
</reference>
<reference key="9">
    <citation type="journal article" date="2009" name="Cell Cycle">
        <title>SKAP associates with kinetochores and promotes the metaphase-to-anaphase transition.</title>
        <authorList>
            <person name="Fang L."/>
            <person name="Seki A."/>
            <person name="Fang G."/>
        </authorList>
    </citation>
    <scope>FUNCTION</scope>
    <scope>SUBCELLULAR LOCATION</scope>
</reference>
<reference key="10">
    <citation type="journal article" date="2011" name="BMC Syst. Biol.">
        <title>Initial characterization of the human central proteome.</title>
        <authorList>
            <person name="Burkard T.R."/>
            <person name="Planyavsky M."/>
            <person name="Kaupe I."/>
            <person name="Breitwieser F.P."/>
            <person name="Buerckstuemmer T."/>
            <person name="Bennett K.L."/>
            <person name="Superti-Furga G."/>
            <person name="Colinge J."/>
        </authorList>
    </citation>
    <scope>IDENTIFICATION BY MASS SPECTROMETRY [LARGE SCALE ANALYSIS]</scope>
</reference>
<reference key="11">
    <citation type="journal article" date="2011" name="J. Cell Biol.">
        <title>The astrin-kinastrin/SKAP complex localizes to microtubule plus ends and facilitates chromosome alignment.</title>
        <authorList>
            <person name="Dunsch A.K."/>
            <person name="Linnane E."/>
            <person name="Barr F.A."/>
            <person name="Gruneberg U."/>
        </authorList>
    </citation>
    <scope>FUNCTION</scope>
    <scope>SUBCELLULAR LOCATION</scope>
    <scope>IDENTIFICATION IN A COMPLEX WITH SPAG5; PLK1; DYNLL1 AND SGO2</scope>
    <scope>INTERACTION WITH SPAG5</scope>
</reference>
<reference key="12">
    <citation type="journal article" date="2012" name="J. Biol. Chem.">
        <title>CENP-E kinesin interacts with SKAP protein to orchestrate accurate chromosome segregation in mitosis.</title>
        <authorList>
            <person name="Huang Y."/>
            <person name="Wang W."/>
            <person name="Yao P."/>
            <person name="Wang X."/>
            <person name="Liu X."/>
            <person name="Zhuang X."/>
            <person name="Yan F."/>
            <person name="Zhou J."/>
            <person name="Du J."/>
            <person name="Ward T."/>
            <person name="Zou H."/>
            <person name="Zhang J."/>
            <person name="Fang G."/>
            <person name="Ding X."/>
            <person name="Dou Z."/>
            <person name="Yao X."/>
        </authorList>
    </citation>
    <scope>FUNCTION</scope>
    <scope>INTERACTION WITH CENPE</scope>
    <scope>BINDING TO MICROTUBULES</scope>
    <scope>SUBCELLULAR LOCATION</scope>
    <scope>INDUCTION</scope>
</reference>
<reference key="13">
    <citation type="journal article" date="2012" name="J. Biol. Chem.">
        <title>Mitotic regulator SKAP forms a link between kinetochore core complex KMN and dynamic spindle microtubules.</title>
        <authorList>
            <person name="Wang X."/>
            <person name="Zhuang X."/>
            <person name="Cao D."/>
            <person name="Chu Y."/>
            <person name="Yao P."/>
            <person name="Liu W."/>
            <person name="Liu L."/>
            <person name="Adams G."/>
            <person name="Fang G."/>
            <person name="Dou Z."/>
            <person name="Ding X."/>
            <person name="Huang Y."/>
            <person name="Wang D."/>
            <person name="Yao X."/>
        </authorList>
    </citation>
    <scope>FUNCTION</scope>
    <scope>SUBCELLULAR LOCATION</scope>
    <scope>INTERACTION WITH DSN1 AND MAPRE1</scope>
</reference>
<reference key="14">
    <citation type="journal article" date="2012" name="J. Cell Biol.">
        <title>Dynein light chain 1 and a spindle-associated adaptor promote dynein asymmetry and spindle orientation.</title>
        <authorList>
            <person name="Dunsch A.K."/>
            <person name="Hammond D."/>
            <person name="Lloyd J."/>
            <person name="Schermelleh L."/>
            <person name="Gruneberg U."/>
            <person name="Barr F.A."/>
        </authorList>
    </citation>
    <scope>INTERACTION WITH DYNLL1</scope>
</reference>
<reference key="15">
    <citation type="journal article" date="2014" name="Nat. Genet.">
        <title>Recurrent point mutations in the kinetochore gene KNSTRN in cutaneous squamous cell carcinoma.</title>
        <authorList>
            <person name="Lee C.S."/>
            <person name="Bhaduri A."/>
            <person name="Mah A."/>
            <person name="Johnson W.L."/>
            <person name="Ungewickell A."/>
            <person name="Aros C.J."/>
            <person name="Nguyen C.B."/>
            <person name="Rios E.J."/>
            <person name="Siprashvili Z."/>
            <person name="Straight A."/>
            <person name="Kim J."/>
            <person name="Aasi S.Z."/>
            <person name="Khavari P.A."/>
        </authorList>
    </citation>
    <scope>INVOLVEMENT IN SCC</scope>
    <scope>VARIANT SCC PHE-24</scope>
    <scope>FUNCTION</scope>
    <scope>TISSUE SPECIFICITY</scope>
</reference>
<reference key="16">
    <citation type="journal article" date="2014" name="PLoS ONE">
        <title>Small kinetochore associated protein (SKAP) promotes UV-induced cell apoptosis through negatively regulating pre-mRNA processing factor 19 (Prp19).</title>
        <authorList>
            <person name="Lu S."/>
            <person name="Wang R."/>
            <person name="Cai C."/>
            <person name="Liang J."/>
            <person name="Xu L."/>
            <person name="Miao S."/>
            <person name="Wang L."/>
            <person name="Song W."/>
        </authorList>
    </citation>
    <scope>INTERACTION WITH PRPF19</scope>
    <scope>SUBCELLULAR LOCATION</scope>
</reference>
<reference key="17">
    <citation type="journal article" date="2018" name="J. Allergy Clin. Immunol.">
        <title>Dual loss of p110delta PI3-kinase and SKAP (KNSTRN) expression leads to combined immunodeficiency and multisystem syndromic features.</title>
        <authorList>
            <person name="Sharfe N."/>
            <person name="Karanxha A."/>
            <person name="Dadi H."/>
            <person name="Merico D."/>
            <person name="Chitayat D."/>
            <person name="Herbrick J.A."/>
            <person name="Freeman S."/>
            <person name="Grinstein S."/>
            <person name="Roifman C.M."/>
        </authorList>
    </citation>
    <scope>INVOLVEMENT IN ROCHIS</scope>
    <scope>SUBCELLULAR LOCATION</scope>
    <scope>INTERACTION WITH MAP4</scope>
</reference>
<proteinExistence type="evidence at protein level"/>
<sequence length="316" mass="35438">MAAPEAPPLDRVFRTTWLSTECDSHPLPPSYRKFLFETQAADLAGGTTVAAGNLLNESEKDCGQDRRAPGVQPCRLVTMTSVVKTVYSLQPPSALSGGQPADTQTRATSKSLLPVRSKEVDVSKQLHSGGPENDVTKITKLRRENGQMKATDTATRRNVRKGYKPLSKQKSEEELKDKNQLLEAVNKQLHQKLTETQGELKDLTQKVELLEKFRDNCLAILESKGLDPALGSETLASRQESTTDHMDSMLLLETLQEELKLFNETAKKQMEELQALKVKLEMKEERVRFLEQQTLCNNQVNDLTTALKEMEQLLEM</sequence>